<dbReference type="EMBL" id="AL078620">
    <property type="protein sequence ID" value="CAB44687.1"/>
    <property type="molecule type" value="Genomic_DNA"/>
</dbReference>
<dbReference type="EMBL" id="AL161595">
    <property type="protein sequence ID" value="CAB80615.1"/>
    <property type="molecule type" value="Genomic_DNA"/>
</dbReference>
<dbReference type="EMBL" id="CP002687">
    <property type="protein sequence ID" value="AEE87081.1"/>
    <property type="molecule type" value="Genomic_DNA"/>
</dbReference>
<dbReference type="EMBL" id="AY035034">
    <property type="protein sequence ID" value="AAK59539.1"/>
    <property type="molecule type" value="mRNA"/>
</dbReference>
<dbReference type="PIR" id="T09368">
    <property type="entry name" value="T09368"/>
</dbReference>
<dbReference type="RefSeq" id="NP_195662.1">
    <property type="nucleotide sequence ID" value="NM_120112.4"/>
</dbReference>
<dbReference type="SMR" id="Q9SVA6"/>
<dbReference type="BioGRID" id="15386">
    <property type="interactions" value="10"/>
</dbReference>
<dbReference type="FunCoup" id="Q9SVA6">
    <property type="interactions" value="5320"/>
</dbReference>
<dbReference type="STRING" id="3702.Q9SVA6"/>
<dbReference type="PaxDb" id="3702-AT4G39520.1"/>
<dbReference type="ProteomicsDB" id="224303"/>
<dbReference type="EnsemblPlants" id="AT4G39520.1">
    <property type="protein sequence ID" value="AT4G39520.1"/>
    <property type="gene ID" value="AT4G39520"/>
</dbReference>
<dbReference type="GeneID" id="830106"/>
<dbReference type="Gramene" id="AT4G39520.1">
    <property type="protein sequence ID" value="AT4G39520.1"/>
    <property type="gene ID" value="AT4G39520"/>
</dbReference>
<dbReference type="KEGG" id="ath:AT4G39520"/>
<dbReference type="Araport" id="AT4G39520"/>
<dbReference type="TAIR" id="AT4G39520">
    <property type="gene designation" value="DRG1-1"/>
</dbReference>
<dbReference type="eggNOG" id="KOG1487">
    <property type="taxonomic scope" value="Eukaryota"/>
</dbReference>
<dbReference type="HOGENOM" id="CLU_044997_0_0_1"/>
<dbReference type="InParanoid" id="Q9SVA6"/>
<dbReference type="OMA" id="SAKHPGQ"/>
<dbReference type="OrthoDB" id="1064085at2759"/>
<dbReference type="PhylomeDB" id="Q9SVA6"/>
<dbReference type="CD-CODE" id="4299E36E">
    <property type="entry name" value="Nucleolus"/>
</dbReference>
<dbReference type="PRO" id="PR:Q9SVA6"/>
<dbReference type="Proteomes" id="UP000006548">
    <property type="component" value="Chromosome 4"/>
</dbReference>
<dbReference type="ExpressionAtlas" id="Q9SVA6">
    <property type="expression patterns" value="baseline and differential"/>
</dbReference>
<dbReference type="GO" id="GO:0019003">
    <property type="term" value="F:GDP binding"/>
    <property type="evidence" value="ECO:0000314"/>
    <property type="project" value="TAIR"/>
</dbReference>
<dbReference type="GO" id="GO:0005525">
    <property type="term" value="F:GTP binding"/>
    <property type="evidence" value="ECO:0000314"/>
    <property type="project" value="TAIR"/>
</dbReference>
<dbReference type="GO" id="GO:0003924">
    <property type="term" value="F:GTPase activity"/>
    <property type="evidence" value="ECO:0000314"/>
    <property type="project" value="TAIR"/>
</dbReference>
<dbReference type="CDD" id="cd01896">
    <property type="entry name" value="DRG"/>
    <property type="match status" value="1"/>
</dbReference>
<dbReference type="CDD" id="cd17230">
    <property type="entry name" value="TGS_DRG1"/>
    <property type="match status" value="1"/>
</dbReference>
<dbReference type="FunFam" id="3.10.20.30:FF:000003">
    <property type="entry name" value="Developmentally-regulated GTP-binding protein 1"/>
    <property type="match status" value="1"/>
</dbReference>
<dbReference type="FunFam" id="3.40.50.300:FF:000740">
    <property type="entry name" value="Putative GTP-binding protein 1"/>
    <property type="match status" value="1"/>
</dbReference>
<dbReference type="Gene3D" id="3.10.20.30">
    <property type="match status" value="1"/>
</dbReference>
<dbReference type="Gene3D" id="6.10.140.1070">
    <property type="match status" value="2"/>
</dbReference>
<dbReference type="InterPro" id="IPR012675">
    <property type="entry name" value="Beta-grasp_dom_sf"/>
</dbReference>
<dbReference type="InterPro" id="IPR045001">
    <property type="entry name" value="DRG"/>
</dbReference>
<dbReference type="InterPro" id="IPR031167">
    <property type="entry name" value="G_OBG"/>
</dbReference>
<dbReference type="InterPro" id="IPR006073">
    <property type="entry name" value="GTP-bd"/>
</dbReference>
<dbReference type="InterPro" id="IPR031662">
    <property type="entry name" value="GTP-binding_2"/>
</dbReference>
<dbReference type="InterPro" id="IPR006074">
    <property type="entry name" value="GTP1-OBG_CS"/>
</dbReference>
<dbReference type="InterPro" id="IPR027417">
    <property type="entry name" value="P-loop_NTPase"/>
</dbReference>
<dbReference type="InterPro" id="IPR005225">
    <property type="entry name" value="Small_GTP-bd"/>
</dbReference>
<dbReference type="InterPro" id="IPR004095">
    <property type="entry name" value="TGS"/>
</dbReference>
<dbReference type="InterPro" id="IPR012676">
    <property type="entry name" value="TGS-like"/>
</dbReference>
<dbReference type="NCBIfam" id="TIGR00231">
    <property type="entry name" value="small_GTP"/>
    <property type="match status" value="1"/>
</dbReference>
<dbReference type="PANTHER" id="PTHR43127">
    <property type="entry name" value="DEVELOPMENTALLY-REGULATED GTP-BINDING PROTEIN 2"/>
    <property type="match status" value="1"/>
</dbReference>
<dbReference type="Pfam" id="PF01926">
    <property type="entry name" value="MMR_HSR1"/>
    <property type="match status" value="1"/>
</dbReference>
<dbReference type="Pfam" id="PF16897">
    <property type="entry name" value="MMR_HSR1_Xtn"/>
    <property type="match status" value="1"/>
</dbReference>
<dbReference type="Pfam" id="PF02824">
    <property type="entry name" value="TGS"/>
    <property type="match status" value="1"/>
</dbReference>
<dbReference type="PRINTS" id="PR00326">
    <property type="entry name" value="GTP1OBG"/>
</dbReference>
<dbReference type="SUPFAM" id="SSF52540">
    <property type="entry name" value="P-loop containing nucleoside triphosphate hydrolases"/>
    <property type="match status" value="1"/>
</dbReference>
<dbReference type="SUPFAM" id="SSF81271">
    <property type="entry name" value="TGS-like"/>
    <property type="match status" value="1"/>
</dbReference>
<dbReference type="PROSITE" id="PS51710">
    <property type="entry name" value="G_OBG"/>
    <property type="match status" value="1"/>
</dbReference>
<dbReference type="PROSITE" id="PS00905">
    <property type="entry name" value="GTP1_OBG"/>
    <property type="match status" value="1"/>
</dbReference>
<dbReference type="PROSITE" id="PS51880">
    <property type="entry name" value="TGS"/>
    <property type="match status" value="1"/>
</dbReference>
<sequence>MSTIMQKIKEIEDEMAKTQKNKATSHHLGLLKAKLAKLRRDLLAPPTKGGGGGAGEGFDVTKSGDSRVGLVGFPSVGKSTLLNKLTGTFSEVASYEFTTLTCIPGVITYRGAKIQLLDLPGIIEGAKDGKGRGRQVISTARTCNCILIVLDAIKPITHKRLIEKELEGFGIRLNKEPPNLTFRKKDKGGINLTSTVAVTHLDLDTVKAICGEYRMHNADITLRYDATADDLIDVIEGSRIYMPCIYAVNKIDSITLEELEILDKLPHYCPVSAHLEWNLDGLLDKIWEYLDLTRIYTKPKAMNPDYDDPVILSSKKRTVEDFCIRIHKDMLKQFKYALVWGSSAKHKPQRVGKEHELEDEDVVQIVKKI</sequence>
<name>DRG3_ARATH</name>
<gene>
    <name type="primary">DRG3</name>
    <name type="synonym">DRG1</name>
    <name type="ordered locus">At4g39520</name>
    <name type="ORF">F23K16.150</name>
</gene>
<accession>Q9SVA6</accession>
<evidence type="ECO:0000255" key="1">
    <source>
        <dbReference type="PROSITE-ProRule" id="PRU01047"/>
    </source>
</evidence>
<evidence type="ECO:0000255" key="2">
    <source>
        <dbReference type="PROSITE-ProRule" id="PRU01228"/>
    </source>
</evidence>
<evidence type="ECO:0000269" key="3">
    <source>
    </source>
</evidence>
<evidence type="ECO:0000305" key="4"/>
<protein>
    <recommendedName>
        <fullName>Developmentally-regulated G-protein 3</fullName>
        <shortName>AtDRG3</shortName>
    </recommendedName>
    <alternativeName>
        <fullName>Developmentally-regulated G-protein 1</fullName>
        <shortName>AtDRG1</shortName>
    </alternativeName>
</protein>
<keyword id="KW-0342">GTP-binding</keyword>
<keyword id="KW-0547">Nucleotide-binding</keyword>
<keyword id="KW-1185">Reference proteome</keyword>
<comment type="function">
    <text evidence="3">Binds GDP and GTP, and has low GTPase activity in vitro.</text>
</comment>
<comment type="similarity">
    <text evidence="1">Belongs to the TRAFAC class OBG-HflX-like GTPase superfamily. OBG GTPase family.</text>
</comment>
<comment type="caution">
    <text evidence="4">The nomenclature of the 3 Arabidopsis DRG genes is ambiguous; in the literature several gene names have been used for the same protein.</text>
</comment>
<feature type="chain" id="PRO_0000424833" description="Developmentally-regulated G-protein 3">
    <location>
        <begin position="1"/>
        <end position="369"/>
    </location>
</feature>
<feature type="domain" description="OBG-type G" evidence="1">
    <location>
        <begin position="66"/>
        <end position="291"/>
    </location>
</feature>
<feature type="domain" description="TGS" evidence="2">
    <location>
        <begin position="291"/>
        <end position="367"/>
    </location>
</feature>
<feature type="binding site" evidence="1">
    <location>
        <begin position="72"/>
        <end position="79"/>
    </location>
    <ligand>
        <name>GTP</name>
        <dbReference type="ChEBI" id="CHEBI:37565"/>
    </ligand>
</feature>
<feature type="binding site" evidence="1">
    <location>
        <begin position="118"/>
        <end position="122"/>
    </location>
    <ligand>
        <name>GTP</name>
        <dbReference type="ChEBI" id="CHEBI:37565"/>
    </ligand>
</feature>
<feature type="binding site" evidence="1">
    <location>
        <begin position="249"/>
        <end position="252"/>
    </location>
    <ligand>
        <name>GTP</name>
        <dbReference type="ChEBI" id="CHEBI:37565"/>
    </ligand>
</feature>
<proteinExistence type="evidence at protein level"/>
<organism>
    <name type="scientific">Arabidopsis thaliana</name>
    <name type="common">Mouse-ear cress</name>
    <dbReference type="NCBI Taxonomy" id="3702"/>
    <lineage>
        <taxon>Eukaryota</taxon>
        <taxon>Viridiplantae</taxon>
        <taxon>Streptophyta</taxon>
        <taxon>Embryophyta</taxon>
        <taxon>Tracheophyta</taxon>
        <taxon>Spermatophyta</taxon>
        <taxon>Magnoliopsida</taxon>
        <taxon>eudicotyledons</taxon>
        <taxon>Gunneridae</taxon>
        <taxon>Pentapetalae</taxon>
        <taxon>rosids</taxon>
        <taxon>malvids</taxon>
        <taxon>Brassicales</taxon>
        <taxon>Brassicaceae</taxon>
        <taxon>Camelineae</taxon>
        <taxon>Arabidopsis</taxon>
    </lineage>
</organism>
<reference key="1">
    <citation type="journal article" date="1999" name="Nature">
        <title>Sequence and analysis of chromosome 4 of the plant Arabidopsis thaliana.</title>
        <authorList>
            <person name="Mayer K.F.X."/>
            <person name="Schueller C."/>
            <person name="Wambutt R."/>
            <person name="Murphy G."/>
            <person name="Volckaert G."/>
            <person name="Pohl T."/>
            <person name="Duesterhoeft A."/>
            <person name="Stiekema W."/>
            <person name="Entian K.-D."/>
            <person name="Terryn N."/>
            <person name="Harris B."/>
            <person name="Ansorge W."/>
            <person name="Brandt P."/>
            <person name="Grivell L.A."/>
            <person name="Rieger M."/>
            <person name="Weichselgartner M."/>
            <person name="de Simone V."/>
            <person name="Obermaier B."/>
            <person name="Mache R."/>
            <person name="Mueller M."/>
            <person name="Kreis M."/>
            <person name="Delseny M."/>
            <person name="Puigdomenech P."/>
            <person name="Watson M."/>
            <person name="Schmidtheini T."/>
            <person name="Reichert B."/>
            <person name="Portetelle D."/>
            <person name="Perez-Alonso M."/>
            <person name="Boutry M."/>
            <person name="Bancroft I."/>
            <person name="Vos P."/>
            <person name="Hoheisel J."/>
            <person name="Zimmermann W."/>
            <person name="Wedler H."/>
            <person name="Ridley P."/>
            <person name="Langham S.-A."/>
            <person name="McCullagh B."/>
            <person name="Bilham L."/>
            <person name="Robben J."/>
            <person name="van der Schueren J."/>
            <person name="Grymonprez B."/>
            <person name="Chuang Y.-J."/>
            <person name="Vandenbussche F."/>
            <person name="Braeken M."/>
            <person name="Weltjens I."/>
            <person name="Voet M."/>
            <person name="Bastiaens I."/>
            <person name="Aert R."/>
            <person name="Defoor E."/>
            <person name="Weitzenegger T."/>
            <person name="Bothe G."/>
            <person name="Ramsperger U."/>
            <person name="Hilbert H."/>
            <person name="Braun M."/>
            <person name="Holzer E."/>
            <person name="Brandt A."/>
            <person name="Peters S."/>
            <person name="van Staveren M."/>
            <person name="Dirkse W."/>
            <person name="Mooijman P."/>
            <person name="Klein Lankhorst R."/>
            <person name="Rose M."/>
            <person name="Hauf J."/>
            <person name="Koetter P."/>
            <person name="Berneiser S."/>
            <person name="Hempel S."/>
            <person name="Feldpausch M."/>
            <person name="Lamberth S."/>
            <person name="Van den Daele H."/>
            <person name="De Keyser A."/>
            <person name="Buysshaert C."/>
            <person name="Gielen J."/>
            <person name="Villarroel R."/>
            <person name="De Clercq R."/>
            <person name="van Montagu M."/>
            <person name="Rogers J."/>
            <person name="Cronin A."/>
            <person name="Quail M.A."/>
            <person name="Bray-Allen S."/>
            <person name="Clark L."/>
            <person name="Doggett J."/>
            <person name="Hall S."/>
            <person name="Kay M."/>
            <person name="Lennard N."/>
            <person name="McLay K."/>
            <person name="Mayes R."/>
            <person name="Pettett A."/>
            <person name="Rajandream M.A."/>
            <person name="Lyne M."/>
            <person name="Benes V."/>
            <person name="Rechmann S."/>
            <person name="Borkova D."/>
            <person name="Bloecker H."/>
            <person name="Scharfe M."/>
            <person name="Grimm M."/>
            <person name="Loehnert T.-H."/>
            <person name="Dose S."/>
            <person name="de Haan M."/>
            <person name="Maarse A.C."/>
            <person name="Schaefer M."/>
            <person name="Mueller-Auer S."/>
            <person name="Gabel C."/>
            <person name="Fuchs M."/>
            <person name="Fartmann B."/>
            <person name="Granderath K."/>
            <person name="Dauner D."/>
            <person name="Herzl A."/>
            <person name="Neumann S."/>
            <person name="Argiriou A."/>
            <person name="Vitale D."/>
            <person name="Liguori R."/>
            <person name="Piravandi E."/>
            <person name="Massenet O."/>
            <person name="Quigley F."/>
            <person name="Clabauld G."/>
            <person name="Muendlein A."/>
            <person name="Felber R."/>
            <person name="Schnabl S."/>
            <person name="Hiller R."/>
            <person name="Schmidt W."/>
            <person name="Lecharny A."/>
            <person name="Aubourg S."/>
            <person name="Chefdor F."/>
            <person name="Cooke R."/>
            <person name="Berger C."/>
            <person name="Monfort A."/>
            <person name="Casacuberta E."/>
            <person name="Gibbons T."/>
            <person name="Weber N."/>
            <person name="Vandenbol M."/>
            <person name="Bargues M."/>
            <person name="Terol J."/>
            <person name="Torres A."/>
            <person name="Perez-Perez A."/>
            <person name="Purnelle B."/>
            <person name="Bent E."/>
            <person name="Johnson S."/>
            <person name="Tacon D."/>
            <person name="Jesse T."/>
            <person name="Heijnen L."/>
            <person name="Schwarz S."/>
            <person name="Scholler P."/>
            <person name="Heber S."/>
            <person name="Francs P."/>
            <person name="Bielke C."/>
            <person name="Frishman D."/>
            <person name="Haase D."/>
            <person name="Lemcke K."/>
            <person name="Mewes H.-W."/>
            <person name="Stocker S."/>
            <person name="Zaccaria P."/>
            <person name="Bevan M."/>
            <person name="Wilson R.K."/>
            <person name="de la Bastide M."/>
            <person name="Habermann K."/>
            <person name="Parnell L."/>
            <person name="Dedhia N."/>
            <person name="Gnoj L."/>
            <person name="Schutz K."/>
            <person name="Huang E."/>
            <person name="Spiegel L."/>
            <person name="Sekhon M."/>
            <person name="Murray J."/>
            <person name="Sheet P."/>
            <person name="Cordes M."/>
            <person name="Abu-Threideh J."/>
            <person name="Stoneking T."/>
            <person name="Kalicki J."/>
            <person name="Graves T."/>
            <person name="Harmon G."/>
            <person name="Edwards J."/>
            <person name="Latreille P."/>
            <person name="Courtney L."/>
            <person name="Cloud J."/>
            <person name="Abbott A."/>
            <person name="Scott K."/>
            <person name="Johnson D."/>
            <person name="Minx P."/>
            <person name="Bentley D."/>
            <person name="Fulton B."/>
            <person name="Miller N."/>
            <person name="Greco T."/>
            <person name="Kemp K."/>
            <person name="Kramer J."/>
            <person name="Fulton L."/>
            <person name="Mardis E."/>
            <person name="Dante M."/>
            <person name="Pepin K."/>
            <person name="Hillier L.W."/>
            <person name="Nelson J."/>
            <person name="Spieth J."/>
            <person name="Ryan E."/>
            <person name="Andrews S."/>
            <person name="Geisel C."/>
            <person name="Layman D."/>
            <person name="Du H."/>
            <person name="Ali J."/>
            <person name="Berghoff A."/>
            <person name="Jones K."/>
            <person name="Drone K."/>
            <person name="Cotton M."/>
            <person name="Joshu C."/>
            <person name="Antonoiu B."/>
            <person name="Zidanic M."/>
            <person name="Strong C."/>
            <person name="Sun H."/>
            <person name="Lamar B."/>
            <person name="Yordan C."/>
            <person name="Ma P."/>
            <person name="Zhong J."/>
            <person name="Preston R."/>
            <person name="Vil D."/>
            <person name="Shekher M."/>
            <person name="Matero A."/>
            <person name="Shah R."/>
            <person name="Swaby I.K."/>
            <person name="O'Shaughnessy A."/>
            <person name="Rodriguez M."/>
            <person name="Hoffman J."/>
            <person name="Till S."/>
            <person name="Granat S."/>
            <person name="Shohdy N."/>
            <person name="Hasegawa A."/>
            <person name="Hameed A."/>
            <person name="Lodhi M."/>
            <person name="Johnson A."/>
            <person name="Chen E."/>
            <person name="Marra M.A."/>
            <person name="Martienssen R."/>
            <person name="McCombie W.R."/>
        </authorList>
    </citation>
    <scope>NUCLEOTIDE SEQUENCE [LARGE SCALE GENOMIC DNA]</scope>
    <source>
        <strain>cv. Columbia</strain>
    </source>
</reference>
<reference key="2">
    <citation type="journal article" date="2017" name="Plant J.">
        <title>Araport11: a complete reannotation of the Arabidopsis thaliana reference genome.</title>
        <authorList>
            <person name="Cheng C.Y."/>
            <person name="Krishnakumar V."/>
            <person name="Chan A.P."/>
            <person name="Thibaud-Nissen F."/>
            <person name="Schobel S."/>
            <person name="Town C.D."/>
        </authorList>
    </citation>
    <scope>GENOME REANNOTATION</scope>
    <source>
        <strain>cv. Columbia</strain>
    </source>
</reference>
<reference key="3">
    <citation type="journal article" date="2003" name="Science">
        <title>Empirical analysis of transcriptional activity in the Arabidopsis genome.</title>
        <authorList>
            <person name="Yamada K."/>
            <person name="Lim J."/>
            <person name="Dale J.M."/>
            <person name="Chen H."/>
            <person name="Shinn P."/>
            <person name="Palm C.J."/>
            <person name="Southwick A.M."/>
            <person name="Wu H.C."/>
            <person name="Kim C.J."/>
            <person name="Nguyen M."/>
            <person name="Pham P.K."/>
            <person name="Cheuk R.F."/>
            <person name="Karlin-Newmann G."/>
            <person name="Liu S.X."/>
            <person name="Lam B."/>
            <person name="Sakano H."/>
            <person name="Wu T."/>
            <person name="Yu G."/>
            <person name="Miranda M."/>
            <person name="Quach H.L."/>
            <person name="Tripp M."/>
            <person name="Chang C.H."/>
            <person name="Lee J.M."/>
            <person name="Toriumi M.J."/>
            <person name="Chan M.M."/>
            <person name="Tang C.C."/>
            <person name="Onodera C.S."/>
            <person name="Deng J.M."/>
            <person name="Akiyama K."/>
            <person name="Ansari Y."/>
            <person name="Arakawa T."/>
            <person name="Banh J."/>
            <person name="Banno F."/>
            <person name="Bowser L."/>
            <person name="Brooks S.Y."/>
            <person name="Carninci P."/>
            <person name="Chao Q."/>
            <person name="Choy N."/>
            <person name="Enju A."/>
            <person name="Goldsmith A.D."/>
            <person name="Gurjal M."/>
            <person name="Hansen N.F."/>
            <person name="Hayashizaki Y."/>
            <person name="Johnson-Hopson C."/>
            <person name="Hsuan V.W."/>
            <person name="Iida K."/>
            <person name="Karnes M."/>
            <person name="Khan S."/>
            <person name="Koesema E."/>
            <person name="Ishida J."/>
            <person name="Jiang P.X."/>
            <person name="Jones T."/>
            <person name="Kawai J."/>
            <person name="Kamiya A."/>
            <person name="Meyers C."/>
            <person name="Nakajima M."/>
            <person name="Narusaka M."/>
            <person name="Seki M."/>
            <person name="Sakurai T."/>
            <person name="Satou M."/>
            <person name="Tamse R."/>
            <person name="Vaysberg M."/>
            <person name="Wallender E.K."/>
            <person name="Wong C."/>
            <person name="Yamamura Y."/>
            <person name="Yuan S."/>
            <person name="Shinozaki K."/>
            <person name="Davis R.W."/>
            <person name="Theologis A."/>
            <person name="Ecker J.R."/>
        </authorList>
    </citation>
    <scope>NUCLEOTIDE SEQUENCE [LARGE SCALE MRNA]</scope>
    <source>
        <strain>cv. Columbia</strain>
    </source>
</reference>
<reference key="4">
    <citation type="journal article" date="2004" name="Plant J.">
        <title>Isolation and identification of phosphatidic acid targets from plants.</title>
        <authorList>
            <person name="Testerink C."/>
            <person name="Dekker H.L."/>
            <person name="Lim Z.-Y."/>
            <person name="Johns M.K."/>
            <person name="Holmes A.B."/>
            <person name="De Koster C.G."/>
            <person name="Ktistakis N.T."/>
            <person name="Munnik T."/>
        </authorList>
    </citation>
    <scope>INTERACTION WITH PHOSPHATIDIC ACID</scope>
    <scope>IDENTIFICATION BY MASS SPECTROMETRY</scope>
</reference>
<reference key="5">
    <citation type="journal article" date="2009" name="Protein Expr. Purif.">
        <title>Biochemical characterization of Arabidopsis developmentally regulated G-proteins (DRGs).</title>
        <authorList>
            <person name="O'Connell A."/>
            <person name="Robin G."/>
            <person name="Kobe B."/>
            <person name="Botella J.R."/>
        </authorList>
    </citation>
    <scope>FUNCTION</scope>
</reference>